<comment type="function">
    <text evidence="1">Catalyzes the final step of fatty acid oxidation in which acetyl-CoA is released and the CoA ester of a fatty acid two carbons shorter is formed.</text>
</comment>
<comment type="catalytic activity">
    <reaction evidence="1">
        <text>an acyl-CoA + acetyl-CoA = a 3-oxoacyl-CoA + CoA</text>
        <dbReference type="Rhea" id="RHEA:21564"/>
        <dbReference type="ChEBI" id="CHEBI:57287"/>
        <dbReference type="ChEBI" id="CHEBI:57288"/>
        <dbReference type="ChEBI" id="CHEBI:58342"/>
        <dbReference type="ChEBI" id="CHEBI:90726"/>
        <dbReference type="EC" id="2.3.1.16"/>
    </reaction>
</comment>
<comment type="pathway">
    <text evidence="1">Lipid metabolism; fatty acid beta-oxidation.</text>
</comment>
<comment type="subunit">
    <text evidence="1">Heterotetramer of two alpha chains (FadB) and two beta chains (FadA).</text>
</comment>
<comment type="subcellular location">
    <subcellularLocation>
        <location evidence="1">Cytoplasm</location>
    </subcellularLocation>
</comment>
<comment type="similarity">
    <text evidence="1">Belongs to the thiolase-like superfamily. Thiolase family.</text>
</comment>
<organism>
    <name type="scientific">Ectopseudomonas mendocina (strain ymp)</name>
    <name type="common">Pseudomonas mendocina</name>
    <dbReference type="NCBI Taxonomy" id="399739"/>
    <lineage>
        <taxon>Bacteria</taxon>
        <taxon>Pseudomonadati</taxon>
        <taxon>Pseudomonadota</taxon>
        <taxon>Gammaproteobacteria</taxon>
        <taxon>Pseudomonadales</taxon>
        <taxon>Pseudomonadaceae</taxon>
        <taxon>Ectopseudomonas</taxon>
    </lineage>
</organism>
<feature type="chain" id="PRO_0000323549" description="3-ketoacyl-CoA thiolase">
    <location>
        <begin position="1"/>
        <end position="391"/>
    </location>
</feature>
<feature type="active site" description="Acyl-thioester intermediate" evidence="1">
    <location>
        <position position="95"/>
    </location>
</feature>
<feature type="active site" description="Proton acceptor" evidence="1">
    <location>
        <position position="347"/>
    </location>
</feature>
<feature type="active site" description="Proton acceptor" evidence="1">
    <location>
        <position position="377"/>
    </location>
</feature>
<reference key="1">
    <citation type="submission" date="2007-04" db="EMBL/GenBank/DDBJ databases">
        <title>Complete sequence of Pseudomonas mendocina ymp.</title>
        <authorList>
            <consortium name="US DOE Joint Genome Institute"/>
            <person name="Copeland A."/>
            <person name="Lucas S."/>
            <person name="Lapidus A."/>
            <person name="Barry K."/>
            <person name="Glavina del Rio T."/>
            <person name="Dalin E."/>
            <person name="Tice H."/>
            <person name="Pitluck S."/>
            <person name="Kiss H."/>
            <person name="Brettin T."/>
            <person name="Detter J.C."/>
            <person name="Bruce D."/>
            <person name="Han C."/>
            <person name="Schmutz J."/>
            <person name="Larimer F."/>
            <person name="Land M."/>
            <person name="Hauser L."/>
            <person name="Kyrpides N."/>
            <person name="Mikhailova N."/>
            <person name="Hersman L."/>
            <person name="Dubois J."/>
            <person name="Maurice P."/>
            <person name="Richardson P."/>
        </authorList>
    </citation>
    <scope>NUCLEOTIDE SEQUENCE [LARGE SCALE GENOMIC DNA]</scope>
    <source>
        <strain>ymp</strain>
    </source>
</reference>
<accession>A4XSM9</accession>
<keyword id="KW-0012">Acyltransferase</keyword>
<keyword id="KW-0963">Cytoplasm</keyword>
<keyword id="KW-0276">Fatty acid metabolism</keyword>
<keyword id="KW-0442">Lipid degradation</keyword>
<keyword id="KW-0443">Lipid metabolism</keyword>
<keyword id="KW-0808">Transferase</keyword>
<proteinExistence type="inferred from homology"/>
<gene>
    <name evidence="1" type="primary">fadA</name>
    <name type="ordered locus">Pmen_1581</name>
</gene>
<sequence>MSLNPRDAVIVDFGRTPMGRSKGGMHRNTRAETMSAHLISKVLERNAKIDPAEVEDVIWGCVNQTLEQGWNIARMASLMTQIPHTSAGQTVSRLCGSSMSALHTAVQAIQTGNGDVFVVGGVEHMGHVGMMHGVDPNPHLSLYAAKASGMMGLTAEMLGKMHGISREAQDAFGERSHRLAHKATVEGKFKDEIIPMQGYDENGFLKVFDYDETIRPETTLESLATLKPAFNPKGGTVTAGTSSQITDGASCMIVMSAQRAQDLGIQPMAVVRAMAVAGVDPAIMGYGPVPSTQKALKRAGLTMADIDFVELNEAFAAQALPVLKDLKLLDKMEEKVNLHGGAIALGHPFGCSGARISGTLLNVMKQNGGTLGVSTMCVGLGQGITTVFERV</sequence>
<evidence type="ECO:0000255" key="1">
    <source>
        <dbReference type="HAMAP-Rule" id="MF_01620"/>
    </source>
</evidence>
<protein>
    <recommendedName>
        <fullName evidence="1">3-ketoacyl-CoA thiolase</fullName>
        <ecNumber evidence="1">2.3.1.16</ecNumber>
    </recommendedName>
    <alternativeName>
        <fullName evidence="1">Acetyl-CoA acyltransferase</fullName>
    </alternativeName>
    <alternativeName>
        <fullName evidence="1">Beta-ketothiolase</fullName>
    </alternativeName>
    <alternativeName>
        <fullName evidence="1">Fatty acid oxidation complex subunit beta</fullName>
    </alternativeName>
</protein>
<dbReference type="EC" id="2.3.1.16" evidence="1"/>
<dbReference type="EMBL" id="CP000680">
    <property type="protein sequence ID" value="ABP84345.1"/>
    <property type="molecule type" value="Genomic_DNA"/>
</dbReference>
<dbReference type="SMR" id="A4XSM9"/>
<dbReference type="STRING" id="399739.Pmen_1581"/>
<dbReference type="KEGG" id="pmy:Pmen_1581"/>
<dbReference type="PATRIC" id="fig|399739.8.peg.1603"/>
<dbReference type="eggNOG" id="COG0183">
    <property type="taxonomic scope" value="Bacteria"/>
</dbReference>
<dbReference type="HOGENOM" id="CLU_031026_2_3_6"/>
<dbReference type="OrthoDB" id="8951704at2"/>
<dbReference type="UniPathway" id="UPA00659"/>
<dbReference type="GO" id="GO:0005737">
    <property type="term" value="C:cytoplasm"/>
    <property type="evidence" value="ECO:0007669"/>
    <property type="project" value="UniProtKB-SubCell"/>
</dbReference>
<dbReference type="GO" id="GO:0003988">
    <property type="term" value="F:acetyl-CoA C-acyltransferase activity"/>
    <property type="evidence" value="ECO:0007669"/>
    <property type="project" value="UniProtKB-UniRule"/>
</dbReference>
<dbReference type="GO" id="GO:0006635">
    <property type="term" value="P:fatty acid beta-oxidation"/>
    <property type="evidence" value="ECO:0007669"/>
    <property type="project" value="UniProtKB-UniRule"/>
</dbReference>
<dbReference type="GO" id="GO:0010124">
    <property type="term" value="P:phenylacetate catabolic process"/>
    <property type="evidence" value="ECO:0007669"/>
    <property type="project" value="TreeGrafter"/>
</dbReference>
<dbReference type="CDD" id="cd00751">
    <property type="entry name" value="thiolase"/>
    <property type="match status" value="1"/>
</dbReference>
<dbReference type="FunFam" id="3.40.47.10:FF:000010">
    <property type="entry name" value="Acetyl-CoA acetyltransferase (Thiolase)"/>
    <property type="match status" value="1"/>
</dbReference>
<dbReference type="Gene3D" id="3.40.47.10">
    <property type="match status" value="2"/>
</dbReference>
<dbReference type="HAMAP" id="MF_01620">
    <property type="entry name" value="FadA"/>
    <property type="match status" value="1"/>
</dbReference>
<dbReference type="InterPro" id="IPR012805">
    <property type="entry name" value="FadA"/>
</dbReference>
<dbReference type="InterPro" id="IPR002155">
    <property type="entry name" value="Thiolase"/>
</dbReference>
<dbReference type="InterPro" id="IPR016039">
    <property type="entry name" value="Thiolase-like"/>
</dbReference>
<dbReference type="InterPro" id="IPR050215">
    <property type="entry name" value="Thiolase-like_sf_Thiolase"/>
</dbReference>
<dbReference type="InterPro" id="IPR020615">
    <property type="entry name" value="Thiolase_acyl_enz_int_AS"/>
</dbReference>
<dbReference type="InterPro" id="IPR020617">
    <property type="entry name" value="Thiolase_C"/>
</dbReference>
<dbReference type="InterPro" id="IPR020613">
    <property type="entry name" value="Thiolase_CS"/>
</dbReference>
<dbReference type="InterPro" id="IPR020616">
    <property type="entry name" value="Thiolase_N"/>
</dbReference>
<dbReference type="NCBIfam" id="TIGR01930">
    <property type="entry name" value="AcCoA-C-Actrans"/>
    <property type="match status" value="1"/>
</dbReference>
<dbReference type="NCBIfam" id="TIGR02445">
    <property type="entry name" value="fadA"/>
    <property type="match status" value="1"/>
</dbReference>
<dbReference type="NCBIfam" id="NF006510">
    <property type="entry name" value="PRK08947.1"/>
    <property type="match status" value="1"/>
</dbReference>
<dbReference type="PANTHER" id="PTHR43853:SF11">
    <property type="entry name" value="3-KETOACYL-COA THIOLASE FADA"/>
    <property type="match status" value="1"/>
</dbReference>
<dbReference type="PANTHER" id="PTHR43853">
    <property type="entry name" value="3-KETOACYL-COA THIOLASE, PEROXISOMAL"/>
    <property type="match status" value="1"/>
</dbReference>
<dbReference type="Pfam" id="PF02803">
    <property type="entry name" value="Thiolase_C"/>
    <property type="match status" value="1"/>
</dbReference>
<dbReference type="Pfam" id="PF00108">
    <property type="entry name" value="Thiolase_N"/>
    <property type="match status" value="1"/>
</dbReference>
<dbReference type="PIRSF" id="PIRSF000429">
    <property type="entry name" value="Ac-CoA_Ac_transf"/>
    <property type="match status" value="1"/>
</dbReference>
<dbReference type="SUPFAM" id="SSF53901">
    <property type="entry name" value="Thiolase-like"/>
    <property type="match status" value="2"/>
</dbReference>
<dbReference type="PROSITE" id="PS00098">
    <property type="entry name" value="THIOLASE_1"/>
    <property type="match status" value="1"/>
</dbReference>
<dbReference type="PROSITE" id="PS00737">
    <property type="entry name" value="THIOLASE_2"/>
    <property type="match status" value="1"/>
</dbReference>
<name>FADA_ECTM1</name>